<accession>Q2IPZ2</accession>
<protein>
    <recommendedName>
        <fullName evidence="1">1-deoxy-D-xylulose-5-phosphate synthase</fullName>
        <ecNumber evidence="1">2.2.1.7</ecNumber>
    </recommendedName>
    <alternativeName>
        <fullName evidence="1">1-deoxyxylulose-5-phosphate synthase</fullName>
        <shortName evidence="1">DXP synthase</shortName>
        <shortName evidence="1">DXPS</shortName>
    </alternativeName>
</protein>
<reference key="1">
    <citation type="submission" date="2006-01" db="EMBL/GenBank/DDBJ databases">
        <title>Complete sequence of Anaeromyxobacter dehalogenans 2CP-C.</title>
        <authorList>
            <person name="Copeland A."/>
            <person name="Lucas S."/>
            <person name="Lapidus A."/>
            <person name="Barry K."/>
            <person name="Detter J.C."/>
            <person name="Glavina T."/>
            <person name="Hammon N."/>
            <person name="Israni S."/>
            <person name="Pitluck S."/>
            <person name="Brettin T."/>
            <person name="Bruce D."/>
            <person name="Han C."/>
            <person name="Tapia R."/>
            <person name="Gilna P."/>
            <person name="Kiss H."/>
            <person name="Schmutz J."/>
            <person name="Larimer F."/>
            <person name="Land M."/>
            <person name="Kyrpides N."/>
            <person name="Anderson I."/>
            <person name="Sanford R.A."/>
            <person name="Ritalahti K.M."/>
            <person name="Thomas H.S."/>
            <person name="Kirby J.R."/>
            <person name="Zhulin I.B."/>
            <person name="Loeffler F.E."/>
            <person name="Richardson P."/>
        </authorList>
    </citation>
    <scope>NUCLEOTIDE SEQUENCE [LARGE SCALE GENOMIC DNA]</scope>
    <source>
        <strain>2CP-C</strain>
    </source>
</reference>
<dbReference type="EC" id="2.2.1.7" evidence="1"/>
<dbReference type="EMBL" id="CP000251">
    <property type="protein sequence ID" value="ABC80872.1"/>
    <property type="molecule type" value="Genomic_DNA"/>
</dbReference>
<dbReference type="RefSeq" id="WP_011420155.1">
    <property type="nucleotide sequence ID" value="NC_007760.1"/>
</dbReference>
<dbReference type="SMR" id="Q2IPZ2"/>
<dbReference type="STRING" id="290397.Adeh_1097"/>
<dbReference type="KEGG" id="ade:Adeh_1097"/>
<dbReference type="eggNOG" id="COG1154">
    <property type="taxonomic scope" value="Bacteria"/>
</dbReference>
<dbReference type="HOGENOM" id="CLU_009227_1_4_7"/>
<dbReference type="OrthoDB" id="9803371at2"/>
<dbReference type="UniPathway" id="UPA00064">
    <property type="reaction ID" value="UER00091"/>
</dbReference>
<dbReference type="Proteomes" id="UP000001935">
    <property type="component" value="Chromosome"/>
</dbReference>
<dbReference type="GO" id="GO:0005829">
    <property type="term" value="C:cytosol"/>
    <property type="evidence" value="ECO:0007669"/>
    <property type="project" value="TreeGrafter"/>
</dbReference>
<dbReference type="GO" id="GO:0008661">
    <property type="term" value="F:1-deoxy-D-xylulose-5-phosphate synthase activity"/>
    <property type="evidence" value="ECO:0007669"/>
    <property type="project" value="UniProtKB-UniRule"/>
</dbReference>
<dbReference type="GO" id="GO:0000287">
    <property type="term" value="F:magnesium ion binding"/>
    <property type="evidence" value="ECO:0007669"/>
    <property type="project" value="UniProtKB-UniRule"/>
</dbReference>
<dbReference type="GO" id="GO:0030976">
    <property type="term" value="F:thiamine pyrophosphate binding"/>
    <property type="evidence" value="ECO:0007669"/>
    <property type="project" value="UniProtKB-UniRule"/>
</dbReference>
<dbReference type="GO" id="GO:0052865">
    <property type="term" value="P:1-deoxy-D-xylulose 5-phosphate biosynthetic process"/>
    <property type="evidence" value="ECO:0007669"/>
    <property type="project" value="UniProtKB-UniPathway"/>
</dbReference>
<dbReference type="GO" id="GO:0019288">
    <property type="term" value="P:isopentenyl diphosphate biosynthetic process, methylerythritol 4-phosphate pathway"/>
    <property type="evidence" value="ECO:0007669"/>
    <property type="project" value="TreeGrafter"/>
</dbReference>
<dbReference type="GO" id="GO:0016114">
    <property type="term" value="P:terpenoid biosynthetic process"/>
    <property type="evidence" value="ECO:0007669"/>
    <property type="project" value="UniProtKB-UniRule"/>
</dbReference>
<dbReference type="GO" id="GO:0009228">
    <property type="term" value="P:thiamine biosynthetic process"/>
    <property type="evidence" value="ECO:0007669"/>
    <property type="project" value="UniProtKB-UniRule"/>
</dbReference>
<dbReference type="CDD" id="cd02007">
    <property type="entry name" value="TPP_DXS"/>
    <property type="match status" value="1"/>
</dbReference>
<dbReference type="CDD" id="cd07033">
    <property type="entry name" value="TPP_PYR_DXS_TK_like"/>
    <property type="match status" value="1"/>
</dbReference>
<dbReference type="FunFam" id="3.40.50.920:FF:000002">
    <property type="entry name" value="1-deoxy-D-xylulose-5-phosphate synthase"/>
    <property type="match status" value="1"/>
</dbReference>
<dbReference type="FunFam" id="3.40.50.970:FF:000005">
    <property type="entry name" value="1-deoxy-D-xylulose-5-phosphate synthase"/>
    <property type="match status" value="1"/>
</dbReference>
<dbReference type="Gene3D" id="3.40.50.920">
    <property type="match status" value="1"/>
</dbReference>
<dbReference type="Gene3D" id="3.40.50.970">
    <property type="match status" value="2"/>
</dbReference>
<dbReference type="HAMAP" id="MF_00315">
    <property type="entry name" value="DXP_synth"/>
    <property type="match status" value="1"/>
</dbReference>
<dbReference type="InterPro" id="IPR005477">
    <property type="entry name" value="Dxylulose-5-P_synthase"/>
</dbReference>
<dbReference type="InterPro" id="IPR029061">
    <property type="entry name" value="THDP-binding"/>
</dbReference>
<dbReference type="InterPro" id="IPR009014">
    <property type="entry name" value="Transketo_C/PFOR_II"/>
</dbReference>
<dbReference type="InterPro" id="IPR005475">
    <property type="entry name" value="Transketolase-like_Pyr-bd"/>
</dbReference>
<dbReference type="InterPro" id="IPR033248">
    <property type="entry name" value="Transketolase_C"/>
</dbReference>
<dbReference type="InterPro" id="IPR049557">
    <property type="entry name" value="Transketolase_CS"/>
</dbReference>
<dbReference type="NCBIfam" id="TIGR00204">
    <property type="entry name" value="dxs"/>
    <property type="match status" value="1"/>
</dbReference>
<dbReference type="NCBIfam" id="NF003933">
    <property type="entry name" value="PRK05444.2-2"/>
    <property type="match status" value="1"/>
</dbReference>
<dbReference type="PANTHER" id="PTHR43322">
    <property type="entry name" value="1-D-DEOXYXYLULOSE 5-PHOSPHATE SYNTHASE-RELATED"/>
    <property type="match status" value="1"/>
</dbReference>
<dbReference type="PANTHER" id="PTHR43322:SF5">
    <property type="entry name" value="1-DEOXY-D-XYLULOSE-5-PHOSPHATE SYNTHASE, CHLOROPLASTIC"/>
    <property type="match status" value="1"/>
</dbReference>
<dbReference type="Pfam" id="PF13292">
    <property type="entry name" value="DXP_synthase_N"/>
    <property type="match status" value="1"/>
</dbReference>
<dbReference type="Pfam" id="PF02779">
    <property type="entry name" value="Transket_pyr"/>
    <property type="match status" value="1"/>
</dbReference>
<dbReference type="Pfam" id="PF02780">
    <property type="entry name" value="Transketolase_C"/>
    <property type="match status" value="1"/>
</dbReference>
<dbReference type="SMART" id="SM00861">
    <property type="entry name" value="Transket_pyr"/>
    <property type="match status" value="1"/>
</dbReference>
<dbReference type="SUPFAM" id="SSF52518">
    <property type="entry name" value="Thiamin diphosphate-binding fold (THDP-binding)"/>
    <property type="match status" value="2"/>
</dbReference>
<dbReference type="SUPFAM" id="SSF52922">
    <property type="entry name" value="TK C-terminal domain-like"/>
    <property type="match status" value="1"/>
</dbReference>
<dbReference type="PROSITE" id="PS00801">
    <property type="entry name" value="TRANSKETOLASE_1"/>
    <property type="match status" value="1"/>
</dbReference>
<name>DXS_ANADE</name>
<evidence type="ECO:0000255" key="1">
    <source>
        <dbReference type="HAMAP-Rule" id="MF_00315"/>
    </source>
</evidence>
<organism>
    <name type="scientific">Anaeromyxobacter dehalogenans (strain 2CP-C)</name>
    <dbReference type="NCBI Taxonomy" id="290397"/>
    <lineage>
        <taxon>Bacteria</taxon>
        <taxon>Pseudomonadati</taxon>
        <taxon>Myxococcota</taxon>
        <taxon>Myxococcia</taxon>
        <taxon>Myxococcales</taxon>
        <taxon>Cystobacterineae</taxon>
        <taxon>Anaeromyxobacteraceae</taxon>
        <taxon>Anaeromyxobacter</taxon>
    </lineage>
</organism>
<feature type="chain" id="PRO_0000256370" description="1-deoxy-D-xylulose-5-phosphate synthase">
    <location>
        <begin position="1"/>
        <end position="636"/>
    </location>
</feature>
<feature type="binding site" evidence="1">
    <location>
        <position position="74"/>
    </location>
    <ligand>
        <name>thiamine diphosphate</name>
        <dbReference type="ChEBI" id="CHEBI:58937"/>
    </ligand>
</feature>
<feature type="binding site" evidence="1">
    <location>
        <begin position="115"/>
        <end position="117"/>
    </location>
    <ligand>
        <name>thiamine diphosphate</name>
        <dbReference type="ChEBI" id="CHEBI:58937"/>
    </ligand>
</feature>
<feature type="binding site" evidence="1">
    <location>
        <position position="146"/>
    </location>
    <ligand>
        <name>Mg(2+)</name>
        <dbReference type="ChEBI" id="CHEBI:18420"/>
    </ligand>
</feature>
<feature type="binding site" evidence="1">
    <location>
        <begin position="147"/>
        <end position="148"/>
    </location>
    <ligand>
        <name>thiamine diphosphate</name>
        <dbReference type="ChEBI" id="CHEBI:58937"/>
    </ligand>
</feature>
<feature type="binding site" evidence="1">
    <location>
        <position position="175"/>
    </location>
    <ligand>
        <name>Mg(2+)</name>
        <dbReference type="ChEBI" id="CHEBI:18420"/>
    </ligand>
</feature>
<feature type="binding site" evidence="1">
    <location>
        <position position="175"/>
    </location>
    <ligand>
        <name>thiamine diphosphate</name>
        <dbReference type="ChEBI" id="CHEBI:58937"/>
    </ligand>
</feature>
<feature type="binding site" evidence="1">
    <location>
        <position position="285"/>
    </location>
    <ligand>
        <name>thiamine diphosphate</name>
        <dbReference type="ChEBI" id="CHEBI:58937"/>
    </ligand>
</feature>
<feature type="binding site" evidence="1">
    <location>
        <position position="368"/>
    </location>
    <ligand>
        <name>thiamine diphosphate</name>
        <dbReference type="ChEBI" id="CHEBI:58937"/>
    </ligand>
</feature>
<comment type="function">
    <text evidence="1">Catalyzes the acyloin condensation reaction between C atoms 2 and 3 of pyruvate and glyceraldehyde 3-phosphate to yield 1-deoxy-D-xylulose-5-phosphate (DXP).</text>
</comment>
<comment type="catalytic activity">
    <reaction evidence="1">
        <text>D-glyceraldehyde 3-phosphate + pyruvate + H(+) = 1-deoxy-D-xylulose 5-phosphate + CO2</text>
        <dbReference type="Rhea" id="RHEA:12605"/>
        <dbReference type="ChEBI" id="CHEBI:15361"/>
        <dbReference type="ChEBI" id="CHEBI:15378"/>
        <dbReference type="ChEBI" id="CHEBI:16526"/>
        <dbReference type="ChEBI" id="CHEBI:57792"/>
        <dbReference type="ChEBI" id="CHEBI:59776"/>
        <dbReference type="EC" id="2.2.1.7"/>
    </reaction>
</comment>
<comment type="cofactor">
    <cofactor evidence="1">
        <name>Mg(2+)</name>
        <dbReference type="ChEBI" id="CHEBI:18420"/>
    </cofactor>
    <text evidence="1">Binds 1 Mg(2+) ion per subunit.</text>
</comment>
<comment type="cofactor">
    <cofactor evidence="1">
        <name>thiamine diphosphate</name>
        <dbReference type="ChEBI" id="CHEBI:58937"/>
    </cofactor>
    <text evidence="1">Binds 1 thiamine pyrophosphate per subunit.</text>
</comment>
<comment type="pathway">
    <text evidence="1">Metabolic intermediate biosynthesis; 1-deoxy-D-xylulose 5-phosphate biosynthesis; 1-deoxy-D-xylulose 5-phosphate from D-glyceraldehyde 3-phosphate and pyruvate: step 1/1.</text>
</comment>
<comment type="subunit">
    <text evidence="1">Homodimer.</text>
</comment>
<comment type="similarity">
    <text evidence="1">Belongs to the transketolase family. DXPS subfamily.</text>
</comment>
<keyword id="KW-0414">Isoprene biosynthesis</keyword>
<keyword id="KW-0460">Magnesium</keyword>
<keyword id="KW-0479">Metal-binding</keyword>
<keyword id="KW-1185">Reference proteome</keyword>
<keyword id="KW-0784">Thiamine biosynthesis</keyword>
<keyword id="KW-0786">Thiamine pyrophosphate</keyword>
<keyword id="KW-0808">Transferase</keyword>
<proteinExistence type="inferred from homology"/>
<sequence length="636" mass="67628">MGRLLDTIDSPADLKKVPVEQLPALCQEIRELIIQTCARNGGHLGSSLGAVEINVALHHVFASPQDKLVWDVGHQAYAHKLLTGRRDAFRTIRTEGGLAGFPERHESAHDAFGVGHASTAISAALGMIEAKRVTGEPGKVVAVVGDGAMTGGVAFEGLNQAGYLGRNLLVVLNDNEMSISPNVGALSEWFSKKFASRTYNRWRRQVKEFLESVPKGPEAIGIIRHGINATKALVTPGILFEGLGFHYVGPVDGHDVKGLVETFQKLAVFDGPVLLHAITTKGKGYHPAESDKATRGHGLSFFDVATGKPVKKSPGAKAYTDLFAEALCEEMEHDPRVVAITAAMLEGTGLIKAKQRFPDRTYDVGIAEQHAVTFAAGLACEGIRPVVAIYSTFLQRAYDQIIHDVALQKLPVTFALDRGGLVGADGKTHQGAFDLAYLRCVPGLVLMAPSDENELRHMLHTSLQHDGPAALRYPRGAGEGVPLEPARVLEIGKGRLVRNVPGKPDVCVVAAGTTLKAALAAAEALAAEGVAVTVVDPRFVKPLDEALICAEAARAKRVVTVEEGCLAGGFGTACLEAFERHGLLEAGLGVRRLGIPDEFITHAEQAKQRAWVGIDAEAIAAACRALVGDRKARGVA</sequence>
<gene>
    <name evidence="1" type="primary">dxs</name>
    <name type="ordered locus">Adeh_1097</name>
</gene>